<feature type="signal peptide" evidence="3">
    <location>
        <begin position="1"/>
        <end position="22"/>
    </location>
</feature>
<feature type="propeptide" id="PRO_0000246164" evidence="1">
    <location>
        <begin position="23"/>
        <end position="138"/>
    </location>
</feature>
<feature type="chain" id="PRO_0000246165" description="Cadherin-13">
    <location>
        <begin position="139"/>
        <end position="693"/>
    </location>
</feature>
<feature type="propeptide" id="PRO_0000246166" description="Removed in mature form" evidence="3">
    <location>
        <begin position="694"/>
        <end position="713"/>
    </location>
</feature>
<feature type="domain" description="Cadherin 1" evidence="4">
    <location>
        <begin position="139"/>
        <end position="245"/>
    </location>
</feature>
<feature type="domain" description="Cadherin 2" evidence="4">
    <location>
        <begin position="246"/>
        <end position="363"/>
    </location>
</feature>
<feature type="domain" description="Cadherin 3" evidence="4">
    <location>
        <begin position="364"/>
        <end position="477"/>
    </location>
</feature>
<feature type="domain" description="Cadherin 4" evidence="4">
    <location>
        <begin position="478"/>
        <end position="585"/>
    </location>
</feature>
<feature type="domain" description="Cadherin 5" evidence="4">
    <location>
        <begin position="584"/>
        <end position="694"/>
    </location>
</feature>
<feature type="region of interest" description="Disordered" evidence="5">
    <location>
        <begin position="156"/>
        <end position="178"/>
    </location>
</feature>
<feature type="compositionally biased region" description="Basic and acidic residues" evidence="5">
    <location>
        <begin position="158"/>
        <end position="172"/>
    </location>
</feature>
<feature type="lipid moiety-binding region" description="GPI-anchor amidated glycine" evidence="3">
    <location>
        <position position="693"/>
    </location>
</feature>
<feature type="glycosylation site" description="N-linked (GlcNAc...) asparagine" evidence="3">
    <location>
        <position position="52"/>
    </location>
</feature>
<feature type="glycosylation site" description="N-linked (GlcNAc...) asparagine" evidence="3">
    <location>
        <position position="86"/>
    </location>
</feature>
<feature type="glycosylation site" description="N-linked (GlcNAc...) asparagine" evidence="3">
    <location>
        <position position="382"/>
    </location>
</feature>
<feature type="glycosylation site" description="N-linked (GlcNAc...) asparagine" evidence="3">
    <location>
        <position position="489"/>
    </location>
</feature>
<feature type="glycosylation site" description="N-linked (GlcNAc...) asparagine" evidence="3">
    <location>
        <position position="500"/>
    </location>
</feature>
<feature type="glycosylation site" description="N-linked (GlcNAc...) asparagine" evidence="3">
    <location>
        <position position="530"/>
    </location>
</feature>
<feature type="glycosylation site" description="N-linked (GlcNAc...) asparagine" evidence="3">
    <location>
        <position position="598"/>
    </location>
</feature>
<feature type="glycosylation site" description="N-linked (GlcNAc...) asparagine" evidence="3">
    <location>
        <position position="638"/>
    </location>
</feature>
<feature type="glycosylation site" description="N-linked (GlcNAc...) asparagine" evidence="3">
    <location>
        <position position="671"/>
    </location>
</feature>
<name>CAD13_BOVIN</name>
<comment type="function">
    <text evidence="1">Cadherins are calcium-dependent cell adhesion proteins. They preferentially interact with themselves in a homophilic manner in connecting cells; cadherins may thus contribute to the sorting of heterogeneous cell types. May act as a negative regulator of neural cell growth (By similarity).</text>
</comment>
<comment type="subunit">
    <text evidence="1">By contrast to classical cadherins, homodimerization in trans is not mediated by cadherin EC1 domain strand-swapping, but instead through a homophilic adhesive interface which joins two elongated EC1-EC2 domains through a region near their Ca2+-binding sites to form a tetrahedral, X-like shape.</text>
</comment>
<comment type="subcellular location">
    <subcellularLocation>
        <location evidence="2">Cell membrane</location>
        <topology evidence="3">Lipid-anchor</topology>
        <topology evidence="3">GPI-anchor</topology>
    </subcellularLocation>
    <subcellularLocation>
        <location evidence="2">Cytoplasm</location>
    </subcellularLocation>
</comment>
<comment type="domain">
    <text evidence="1">Three calcium ions are usually bound at the interface of each cadherin domain and rigidify the connections, imparting a strong curvature to the full-length ectodomain.</text>
</comment>
<gene>
    <name type="primary">CDH13</name>
</gene>
<proteinExistence type="evidence at transcript level"/>
<dbReference type="EMBL" id="BC107535">
    <property type="protein sequence ID" value="AAI07536.1"/>
    <property type="molecule type" value="mRNA"/>
</dbReference>
<dbReference type="RefSeq" id="NP_001030354.1">
    <property type="nucleotide sequence ID" value="NM_001035277.2"/>
</dbReference>
<dbReference type="SMR" id="Q3B7N0"/>
<dbReference type="FunCoup" id="Q3B7N0">
    <property type="interactions" value="122"/>
</dbReference>
<dbReference type="STRING" id="9913.ENSBTAP00000073721"/>
<dbReference type="GlyCosmos" id="Q3B7N0">
    <property type="glycosylation" value="9 sites, No reported glycans"/>
</dbReference>
<dbReference type="GlyGen" id="Q3B7N0">
    <property type="glycosylation" value="9 sites"/>
</dbReference>
<dbReference type="PaxDb" id="9913-ENSBTAP00000051651"/>
<dbReference type="PeptideAtlas" id="Q3B7N0"/>
<dbReference type="Ensembl" id="ENSBTAT00000079761.2">
    <property type="protein sequence ID" value="ENSBTAP00000074076.2"/>
    <property type="gene ID" value="ENSBTAG00000034373.5"/>
</dbReference>
<dbReference type="GeneID" id="512302"/>
<dbReference type="KEGG" id="bta:512302"/>
<dbReference type="CTD" id="1012"/>
<dbReference type="VGNC" id="VGNC:27093">
    <property type="gene designation" value="CDH13"/>
</dbReference>
<dbReference type="eggNOG" id="KOG3594">
    <property type="taxonomic scope" value="Eukaryota"/>
</dbReference>
<dbReference type="GeneTree" id="ENSGT00940000155218"/>
<dbReference type="InParanoid" id="Q3B7N0"/>
<dbReference type="OrthoDB" id="9933746at2759"/>
<dbReference type="Proteomes" id="UP000009136">
    <property type="component" value="Chromosome 18"/>
</dbReference>
<dbReference type="GO" id="GO:0005912">
    <property type="term" value="C:adherens junction"/>
    <property type="evidence" value="ECO:0000318"/>
    <property type="project" value="GO_Central"/>
</dbReference>
<dbReference type="GO" id="GO:0016342">
    <property type="term" value="C:catenin complex"/>
    <property type="evidence" value="ECO:0000318"/>
    <property type="project" value="GO_Central"/>
</dbReference>
<dbReference type="GO" id="GO:0005737">
    <property type="term" value="C:cytoplasm"/>
    <property type="evidence" value="ECO:0007669"/>
    <property type="project" value="UniProtKB-SubCell"/>
</dbReference>
<dbReference type="GO" id="GO:0098552">
    <property type="term" value="C:side of membrane"/>
    <property type="evidence" value="ECO:0007669"/>
    <property type="project" value="UniProtKB-KW"/>
</dbReference>
<dbReference type="GO" id="GO:0008013">
    <property type="term" value="F:beta-catenin binding"/>
    <property type="evidence" value="ECO:0000318"/>
    <property type="project" value="GO_Central"/>
</dbReference>
<dbReference type="GO" id="GO:0045296">
    <property type="term" value="F:cadherin binding"/>
    <property type="evidence" value="ECO:0000318"/>
    <property type="project" value="GO_Central"/>
</dbReference>
<dbReference type="GO" id="GO:0005509">
    <property type="term" value="F:calcium ion binding"/>
    <property type="evidence" value="ECO:0007669"/>
    <property type="project" value="InterPro"/>
</dbReference>
<dbReference type="GO" id="GO:0034332">
    <property type="term" value="P:adherens junction organization"/>
    <property type="evidence" value="ECO:0000318"/>
    <property type="project" value="GO_Central"/>
</dbReference>
<dbReference type="GO" id="GO:0016339">
    <property type="term" value="P:calcium-dependent cell-cell adhesion via plasma membrane cell adhesion molecules"/>
    <property type="evidence" value="ECO:0000318"/>
    <property type="project" value="GO_Central"/>
</dbReference>
<dbReference type="GO" id="GO:0016477">
    <property type="term" value="P:cell migration"/>
    <property type="evidence" value="ECO:0000318"/>
    <property type="project" value="GO_Central"/>
</dbReference>
<dbReference type="GO" id="GO:0000902">
    <property type="term" value="P:cell morphogenesis"/>
    <property type="evidence" value="ECO:0000318"/>
    <property type="project" value="GO_Central"/>
</dbReference>
<dbReference type="GO" id="GO:0044331">
    <property type="term" value="P:cell-cell adhesion mediated by cadherin"/>
    <property type="evidence" value="ECO:0000318"/>
    <property type="project" value="GO_Central"/>
</dbReference>
<dbReference type="GO" id="GO:0007043">
    <property type="term" value="P:cell-cell junction assembly"/>
    <property type="evidence" value="ECO:0000318"/>
    <property type="project" value="GO_Central"/>
</dbReference>
<dbReference type="GO" id="GO:0007156">
    <property type="term" value="P:homophilic cell adhesion via plasma membrane adhesion molecules"/>
    <property type="evidence" value="ECO:0007669"/>
    <property type="project" value="InterPro"/>
</dbReference>
<dbReference type="CDD" id="cd11304">
    <property type="entry name" value="Cadherin_repeat"/>
    <property type="match status" value="5"/>
</dbReference>
<dbReference type="FunFam" id="2.60.40.60:FF:000011">
    <property type="entry name" value="Cadherin 1"/>
    <property type="match status" value="1"/>
</dbReference>
<dbReference type="FunFam" id="2.60.40.60:FF:000095">
    <property type="entry name" value="Cadherin 13"/>
    <property type="match status" value="1"/>
</dbReference>
<dbReference type="FunFam" id="2.60.40.60:FF:000019">
    <property type="entry name" value="Cadherin 2"/>
    <property type="match status" value="1"/>
</dbReference>
<dbReference type="FunFam" id="2.60.40.60:FF:000022">
    <property type="entry name" value="Cadherin 2"/>
    <property type="match status" value="1"/>
</dbReference>
<dbReference type="FunFam" id="2.60.40.60:FF:000031">
    <property type="entry name" value="Cadherin 3"/>
    <property type="match status" value="1"/>
</dbReference>
<dbReference type="FunFam" id="2.60.40.60:FF:000148">
    <property type="entry name" value="cadherin-13 isoform X1"/>
    <property type="match status" value="1"/>
</dbReference>
<dbReference type="Gene3D" id="2.60.40.60">
    <property type="entry name" value="Cadherins"/>
    <property type="match status" value="6"/>
</dbReference>
<dbReference type="InterPro" id="IPR039808">
    <property type="entry name" value="Cadherin"/>
</dbReference>
<dbReference type="InterPro" id="IPR002126">
    <property type="entry name" value="Cadherin-like_dom"/>
</dbReference>
<dbReference type="InterPro" id="IPR015919">
    <property type="entry name" value="Cadherin-like_sf"/>
</dbReference>
<dbReference type="InterPro" id="IPR020894">
    <property type="entry name" value="Cadherin_CS"/>
</dbReference>
<dbReference type="InterPro" id="IPR014868">
    <property type="entry name" value="Cadherin_pro_dom"/>
</dbReference>
<dbReference type="PANTHER" id="PTHR24027:SF80">
    <property type="entry name" value="CADHERIN-13"/>
    <property type="match status" value="1"/>
</dbReference>
<dbReference type="PANTHER" id="PTHR24027">
    <property type="entry name" value="CADHERIN-23"/>
    <property type="match status" value="1"/>
</dbReference>
<dbReference type="Pfam" id="PF00028">
    <property type="entry name" value="Cadherin"/>
    <property type="match status" value="5"/>
</dbReference>
<dbReference type="Pfam" id="PF08758">
    <property type="entry name" value="Cadherin_pro"/>
    <property type="match status" value="1"/>
</dbReference>
<dbReference type="PRINTS" id="PR00205">
    <property type="entry name" value="CADHERIN"/>
</dbReference>
<dbReference type="SMART" id="SM00112">
    <property type="entry name" value="CA"/>
    <property type="match status" value="5"/>
</dbReference>
<dbReference type="SMART" id="SM01055">
    <property type="entry name" value="Cadherin_pro"/>
    <property type="match status" value="1"/>
</dbReference>
<dbReference type="SUPFAM" id="SSF49313">
    <property type="entry name" value="Cadherin-like"/>
    <property type="match status" value="6"/>
</dbReference>
<dbReference type="PROSITE" id="PS00232">
    <property type="entry name" value="CADHERIN_1"/>
    <property type="match status" value="3"/>
</dbReference>
<dbReference type="PROSITE" id="PS50268">
    <property type="entry name" value="CADHERIN_2"/>
    <property type="match status" value="5"/>
</dbReference>
<protein>
    <recommendedName>
        <fullName>Cadherin-13</fullName>
    </recommendedName>
</protein>
<sequence length="713" mass="78197">MQPATPLVLCVLLSQVLLLTSAEDLDCTPGFQQKVFHIDQPAEFIEDQAILNLTFSDCKGNDKLHYEVSSPYFRVNTDGSLVALRNITAVGKTLFVHARTPHAEDMAELVIVGGKDIQGSLQDIFKFARTSPVPRQKRSIVVSPILIPENQRQPFPRDVGKVVDSDRPEGSKFRLTGKGVDQEPKGIFRINENTGSVSVTRNLDRETIATYQLFVETVDVNGRTLEGPVPLEVIVIDQNDNRPIFREGPYIGHVMEGSPTGTTVMRMTAFDADDPATDNALLRYNIRQQTPDKPSPNMFYIDPEKGDIVTVVSPALLDRETLENPKYELIIEAQDMAGLDVGLTGTATATIMIDDKNDHSPKFTKKEFQATVEEGAMGVIVNLTVEDKDDPTTGAWRAAYTIINGNPGQSFEIHTNPQTNEGMLSVVKPLDYEISAFHTLLIKVENEDPLVPDVSYGSSSTATVHITVLDANESPVFYPDPMMVTKQENISVGSVLLTVNATDPDSLQRQTIRYSVYKDPAGWLNINPINGTVDTTALLDRESPFVHNSVYTALFLATDSGNPPATGTGTLLITLEDVNDNAPFIYPTVAEVCDDAKNLSVVILGATDKDLHPNTDPFKFEIHKQTVPDKVWKISKINNTHALVSLLQNLNKANYHLPIMVTDSGKPPMTNITDLRVQVCSCKNSKVDCNAAGAPHFSAATALLLSLFSLARL</sequence>
<keyword id="KW-0106">Calcium</keyword>
<keyword id="KW-0130">Cell adhesion</keyword>
<keyword id="KW-1003">Cell membrane</keyword>
<keyword id="KW-0165">Cleavage on pair of basic residues</keyword>
<keyword id="KW-0963">Cytoplasm</keyword>
<keyword id="KW-0325">Glycoprotein</keyword>
<keyword id="KW-0336">GPI-anchor</keyword>
<keyword id="KW-0449">Lipoprotein</keyword>
<keyword id="KW-0472">Membrane</keyword>
<keyword id="KW-0479">Metal-binding</keyword>
<keyword id="KW-1185">Reference proteome</keyword>
<keyword id="KW-0677">Repeat</keyword>
<keyword id="KW-0732">Signal</keyword>
<organism>
    <name type="scientific">Bos taurus</name>
    <name type="common">Bovine</name>
    <dbReference type="NCBI Taxonomy" id="9913"/>
    <lineage>
        <taxon>Eukaryota</taxon>
        <taxon>Metazoa</taxon>
        <taxon>Chordata</taxon>
        <taxon>Craniata</taxon>
        <taxon>Vertebrata</taxon>
        <taxon>Euteleostomi</taxon>
        <taxon>Mammalia</taxon>
        <taxon>Eutheria</taxon>
        <taxon>Laurasiatheria</taxon>
        <taxon>Artiodactyla</taxon>
        <taxon>Ruminantia</taxon>
        <taxon>Pecora</taxon>
        <taxon>Bovidae</taxon>
        <taxon>Bovinae</taxon>
        <taxon>Bos</taxon>
    </lineage>
</organism>
<reference key="1">
    <citation type="submission" date="2005-10" db="EMBL/GenBank/DDBJ databases">
        <authorList>
            <consortium name="NIH - Mammalian Gene Collection (MGC) project"/>
        </authorList>
    </citation>
    <scope>NUCLEOTIDE SEQUENCE [LARGE SCALE MRNA]</scope>
    <source>
        <strain>Hereford</strain>
        <tissue>Heart ventricle</tissue>
    </source>
</reference>
<evidence type="ECO:0000250" key="1"/>
<evidence type="ECO:0000250" key="2">
    <source>
        <dbReference type="UniProtKB" id="Q9WTR5"/>
    </source>
</evidence>
<evidence type="ECO:0000255" key="3"/>
<evidence type="ECO:0000255" key="4">
    <source>
        <dbReference type="PROSITE-ProRule" id="PRU00043"/>
    </source>
</evidence>
<evidence type="ECO:0000256" key="5">
    <source>
        <dbReference type="SAM" id="MobiDB-lite"/>
    </source>
</evidence>
<accession>Q3B7N0</accession>